<name>EFHB_HUMAN</name>
<comment type="function">
    <text evidence="5 6">Microtubule inner protein (MIP) part of the dynein-decorated doublet microtubules (DMTs) in cilia axoneme, which is required for motile cilia beating (PubMed:36191189). Cytosolic sensor for calcium, modulates the interaction of STIM1 and ORAI1 upon store depletion and the activation of store-operated Ca(2+) entry (SOCE) and NFAT translocation from cytosol to nucleus (PubMed:30481768).</text>
</comment>
<comment type="subunit">
    <text evidence="1 5">Microtubule inner protein component of sperm flagellar doublet microtubules (By similarity). Interacts with STIM1 and ORAI1; the interactions take place upon Ca(2+)-store depletion and dissociate through a Ca(2+)-dependent mechanism. Interaction with STIM1 inhibits STIM1 interaction with SARAF (PubMed:30481768).</text>
</comment>
<comment type="interaction">
    <interactant intactId="EBI-25602059">
        <id>Q8N7U6</id>
    </interactant>
    <interactant intactId="EBI-2291476">
        <id>Q96D31</id>
        <label>ORAI1</label>
    </interactant>
    <organismsDiffer>false</organismsDiffer>
    <experiments>2</experiments>
</comment>
<comment type="interaction">
    <interactant intactId="EBI-25602059">
        <id>Q8N7U6</id>
    </interactant>
    <interactant intactId="EBI-448878">
        <id>Q13586</id>
        <label>STIM1</label>
    </interactant>
    <organismsDiffer>false</organismsDiffer>
    <experiments>3</experiments>
</comment>
<comment type="subcellular location">
    <subcellularLocation>
        <location evidence="6">Cytoplasm</location>
        <location evidence="6">Cytoskeleton</location>
        <location evidence="6">Cilium axoneme</location>
    </subcellularLocation>
    <subcellularLocation>
        <location evidence="1">Cytoplasm</location>
        <location evidence="1">Cytoskeleton</location>
        <location evidence="1">Flagellum axoneme</location>
    </subcellularLocation>
    <subcellularLocation>
        <location evidence="9">Cytoplasm</location>
    </subcellularLocation>
</comment>
<comment type="alternative products">
    <event type="alternative splicing"/>
    <isoform>
        <id>Q8N7U6-1</id>
        <name>1</name>
        <sequence type="displayed"/>
    </isoform>
    <isoform>
        <id>Q8N7U6-2</id>
        <name>2</name>
        <sequence type="described" ref="VSP_020864 VSP_020865"/>
    </isoform>
    <isoform>
        <id>Q8N7U6-3</id>
        <name>3</name>
        <sequence type="described" ref="VSP_020862 VSP_020863"/>
    </isoform>
</comment>
<comment type="tissue specificity">
    <text evidence="6">Expressed in airway epithelial cells.</text>
</comment>
<comment type="sequence caution" evidence="8">
    <conflict type="erroneous initiation">
        <sequence resource="EMBL-CDS" id="AAH28198"/>
    </conflict>
    <text>Truncated N-terminus.</text>
</comment>
<comment type="sequence caution" evidence="8">
    <conflict type="erroneous initiation">
        <sequence resource="EMBL-CDS" id="BAB71614"/>
    </conflict>
    <text>Truncated N-terminus.</text>
</comment>
<proteinExistence type="evidence at protein level"/>
<gene>
    <name evidence="10" type="primary">EFHB</name>
    <name type="synonym">CFAP21</name>
</gene>
<feature type="chain" id="PRO_0000252094" description="EF-hand domain-containing family member B">
    <location>
        <begin position="1"/>
        <end position="833"/>
    </location>
</feature>
<feature type="domain" description="EF-hand 1" evidence="2">
    <location>
        <begin position="561"/>
        <end position="596"/>
    </location>
</feature>
<feature type="domain" description="EF-hand 2" evidence="2">
    <location>
        <begin position="597"/>
        <end position="632"/>
    </location>
</feature>
<feature type="binding site" evidence="8">
    <location>
        <position position="574"/>
    </location>
    <ligand>
        <name>Ca(2+)</name>
        <dbReference type="ChEBI" id="CHEBI:29108"/>
        <label>1</label>
    </ligand>
</feature>
<feature type="binding site" evidence="8">
    <location>
        <position position="578"/>
    </location>
    <ligand>
        <name>Ca(2+)</name>
        <dbReference type="ChEBI" id="CHEBI:29108"/>
        <label>1</label>
    </ligand>
</feature>
<feature type="binding site" evidence="8">
    <location>
        <position position="580"/>
    </location>
    <ligand>
        <name>Ca(2+)</name>
        <dbReference type="ChEBI" id="CHEBI:29108"/>
        <label>1</label>
    </ligand>
</feature>
<feature type="binding site" evidence="8">
    <location>
        <position position="585"/>
    </location>
    <ligand>
        <name>Ca(2+)</name>
        <dbReference type="ChEBI" id="CHEBI:29108"/>
        <label>1</label>
    </ligand>
</feature>
<feature type="binding site" evidence="2">
    <location>
        <position position="610"/>
    </location>
    <ligand>
        <name>Ca(2+)</name>
        <dbReference type="ChEBI" id="CHEBI:29108"/>
        <label>2</label>
    </ligand>
</feature>
<feature type="binding site" evidence="2">
    <location>
        <position position="612"/>
    </location>
    <ligand>
        <name>Ca(2+)</name>
        <dbReference type="ChEBI" id="CHEBI:29108"/>
        <label>2</label>
    </ligand>
</feature>
<feature type="binding site" evidence="2">
    <location>
        <position position="614"/>
    </location>
    <ligand>
        <name>Ca(2+)</name>
        <dbReference type="ChEBI" id="CHEBI:29108"/>
        <label>2</label>
    </ligand>
</feature>
<feature type="binding site" evidence="2">
    <location>
        <position position="621"/>
    </location>
    <ligand>
        <name>Ca(2+)</name>
        <dbReference type="ChEBI" id="CHEBI:29108"/>
        <label>2</label>
    </ligand>
</feature>
<feature type="splice variant" id="VSP_020862" description="In isoform 3." evidence="7">
    <location>
        <begin position="1"/>
        <end position="130"/>
    </location>
</feature>
<feature type="splice variant" id="VSP_020863" description="In isoform 3." evidence="7">
    <original>GRVCGSSQAAGSRRAPLASGPEGVEELVGKPAFVMEPRQEMEKESTCVLMKPN</original>
    <variation>MMAHCRIDLLGSSDPPTSASQIAETTDVSHHAGLIEFLALSNSSALASRSVEI</variation>
    <location>
        <begin position="131"/>
        <end position="183"/>
    </location>
</feature>
<feature type="splice variant" id="VSP_020864" description="In isoform 2." evidence="7">
    <original>KGDGMIDKDELQEACDQANLSLDDKLLDQLFDYCDVDNDGFINYLEFANFLNWKDKM</original>
    <variation>AGVQWRDLGSLQPPPPRFKRFSCLSLPSSWDYRHLPPHPNFRIFSRDGVSPCWPGWS</variation>
    <location>
        <begin position="576"/>
        <end position="632"/>
    </location>
</feature>
<feature type="splice variant" id="VSP_020865" description="In isoform 2." evidence="7">
    <location>
        <begin position="633"/>
        <end position="833"/>
    </location>
</feature>
<feature type="sequence variant" id="VAR_055296" description="In dbSNP:rs17795400.">
    <original>G</original>
    <variation>V</variation>
    <location>
        <position position="99"/>
    </location>
</feature>
<feature type="sequence variant" id="VAR_055297" description="In dbSNP:rs13078867.">
    <original>P</original>
    <variation>S</variation>
    <location>
        <position position="269"/>
    </location>
</feature>
<feature type="sequence variant" id="VAR_027750" description="In dbSNP:rs2931403." evidence="3 4">
    <original>V</original>
    <variation>I</variation>
    <location>
        <position position="331"/>
    </location>
</feature>
<feature type="sequence variant" id="VAR_027751" description="In dbSNP:rs2929366." evidence="4">
    <original>T</original>
    <variation>I</variation>
    <location>
        <position position="382"/>
    </location>
</feature>
<feature type="sequence variant" id="VAR_027752" description="In dbSNP:rs9868950.">
    <original>Q</original>
    <variation>P</variation>
    <location>
        <position position="663"/>
    </location>
</feature>
<feature type="sequence variant" id="VAR_055298" description="In dbSNP:rs11917204.">
    <original>R</original>
    <variation>W</variation>
    <location>
        <position position="826"/>
    </location>
</feature>
<feature type="sequence conflict" description="In Ref. 1; AK097644." evidence="8" ref="1">
    <original>M</original>
    <variation>V</variation>
    <location>
        <position position="1"/>
    </location>
</feature>
<feature type="sequence conflict" description="In Ref. 1; BAC85491." evidence="8" ref="1">
    <original>T</original>
    <variation>S</variation>
    <location>
        <position position="276"/>
    </location>
</feature>
<feature type="sequence conflict" description="In Ref. 1; AK097644." evidence="8" ref="1">
    <original>Q</original>
    <variation>R</variation>
    <location>
        <position position="492"/>
    </location>
</feature>
<feature type="sequence conflict" description="In Ref. 1; BAC85491." evidence="8" ref="1">
    <original>W</original>
    <variation>C</variation>
    <location>
        <position position="628"/>
    </location>
</feature>
<feature type="sequence conflict" description="In Ref. 1; BAC85491." evidence="8" ref="1">
    <original>R</original>
    <variation>W</variation>
    <location>
        <position position="685"/>
    </location>
</feature>
<feature type="sequence conflict" description="In Ref. 1; BAC85491." evidence="8" ref="1">
    <original>I</original>
    <variation>T</variation>
    <location>
        <position position="737"/>
    </location>
</feature>
<reference key="1">
    <citation type="journal article" date="2004" name="Nat. Genet.">
        <title>Complete sequencing and characterization of 21,243 full-length human cDNAs.</title>
        <authorList>
            <person name="Ota T."/>
            <person name="Suzuki Y."/>
            <person name="Nishikawa T."/>
            <person name="Otsuki T."/>
            <person name="Sugiyama T."/>
            <person name="Irie R."/>
            <person name="Wakamatsu A."/>
            <person name="Hayashi K."/>
            <person name="Sato H."/>
            <person name="Nagai K."/>
            <person name="Kimura K."/>
            <person name="Makita H."/>
            <person name="Sekine M."/>
            <person name="Obayashi M."/>
            <person name="Nishi T."/>
            <person name="Shibahara T."/>
            <person name="Tanaka T."/>
            <person name="Ishii S."/>
            <person name="Yamamoto J."/>
            <person name="Saito K."/>
            <person name="Kawai Y."/>
            <person name="Isono Y."/>
            <person name="Nakamura Y."/>
            <person name="Nagahari K."/>
            <person name="Murakami K."/>
            <person name="Yasuda T."/>
            <person name="Iwayanagi T."/>
            <person name="Wagatsuma M."/>
            <person name="Shiratori A."/>
            <person name="Sudo H."/>
            <person name="Hosoiri T."/>
            <person name="Kaku Y."/>
            <person name="Kodaira H."/>
            <person name="Kondo H."/>
            <person name="Sugawara M."/>
            <person name="Takahashi M."/>
            <person name="Kanda K."/>
            <person name="Yokoi T."/>
            <person name="Furuya T."/>
            <person name="Kikkawa E."/>
            <person name="Omura Y."/>
            <person name="Abe K."/>
            <person name="Kamihara K."/>
            <person name="Katsuta N."/>
            <person name="Sato K."/>
            <person name="Tanikawa M."/>
            <person name="Yamazaki M."/>
            <person name="Ninomiya K."/>
            <person name="Ishibashi T."/>
            <person name="Yamashita H."/>
            <person name="Murakawa K."/>
            <person name="Fujimori K."/>
            <person name="Tanai H."/>
            <person name="Kimata M."/>
            <person name="Watanabe M."/>
            <person name="Hiraoka S."/>
            <person name="Chiba Y."/>
            <person name="Ishida S."/>
            <person name="Ono Y."/>
            <person name="Takiguchi S."/>
            <person name="Watanabe S."/>
            <person name="Yosida M."/>
            <person name="Hotuta T."/>
            <person name="Kusano J."/>
            <person name="Kanehori K."/>
            <person name="Takahashi-Fujii A."/>
            <person name="Hara H."/>
            <person name="Tanase T.-O."/>
            <person name="Nomura Y."/>
            <person name="Togiya S."/>
            <person name="Komai F."/>
            <person name="Hara R."/>
            <person name="Takeuchi K."/>
            <person name="Arita M."/>
            <person name="Imose N."/>
            <person name="Musashino K."/>
            <person name="Yuuki H."/>
            <person name="Oshima A."/>
            <person name="Sasaki N."/>
            <person name="Aotsuka S."/>
            <person name="Yoshikawa Y."/>
            <person name="Matsunawa H."/>
            <person name="Ichihara T."/>
            <person name="Shiohata N."/>
            <person name="Sano S."/>
            <person name="Moriya S."/>
            <person name="Momiyama H."/>
            <person name="Satoh N."/>
            <person name="Takami S."/>
            <person name="Terashima Y."/>
            <person name="Suzuki O."/>
            <person name="Nakagawa S."/>
            <person name="Senoh A."/>
            <person name="Mizoguchi H."/>
            <person name="Goto Y."/>
            <person name="Shimizu F."/>
            <person name="Wakebe H."/>
            <person name="Hishigaki H."/>
            <person name="Watanabe T."/>
            <person name="Sugiyama A."/>
            <person name="Takemoto M."/>
            <person name="Kawakami B."/>
            <person name="Yamazaki M."/>
            <person name="Watanabe K."/>
            <person name="Kumagai A."/>
            <person name="Itakura S."/>
            <person name="Fukuzumi Y."/>
            <person name="Fujimori Y."/>
            <person name="Komiyama M."/>
            <person name="Tashiro H."/>
            <person name="Tanigami A."/>
            <person name="Fujiwara T."/>
            <person name="Ono T."/>
            <person name="Yamada K."/>
            <person name="Fujii Y."/>
            <person name="Ozaki K."/>
            <person name="Hirao M."/>
            <person name="Ohmori Y."/>
            <person name="Kawabata A."/>
            <person name="Hikiji T."/>
            <person name="Kobatake N."/>
            <person name="Inagaki H."/>
            <person name="Ikema Y."/>
            <person name="Okamoto S."/>
            <person name="Okitani R."/>
            <person name="Kawakami T."/>
            <person name="Noguchi S."/>
            <person name="Itoh T."/>
            <person name="Shigeta K."/>
            <person name="Senba T."/>
            <person name="Matsumura K."/>
            <person name="Nakajima Y."/>
            <person name="Mizuno T."/>
            <person name="Morinaga M."/>
            <person name="Sasaki M."/>
            <person name="Togashi T."/>
            <person name="Oyama M."/>
            <person name="Hata H."/>
            <person name="Watanabe M."/>
            <person name="Komatsu T."/>
            <person name="Mizushima-Sugano J."/>
            <person name="Satoh T."/>
            <person name="Shirai Y."/>
            <person name="Takahashi Y."/>
            <person name="Nakagawa K."/>
            <person name="Okumura K."/>
            <person name="Nagase T."/>
            <person name="Nomura N."/>
            <person name="Kikuchi H."/>
            <person name="Masuho Y."/>
            <person name="Yamashita R."/>
            <person name="Nakai K."/>
            <person name="Yada T."/>
            <person name="Nakamura Y."/>
            <person name="Ohara O."/>
            <person name="Isogai T."/>
            <person name="Sugano S."/>
        </authorList>
    </citation>
    <scope>NUCLEOTIDE SEQUENCE [LARGE SCALE MRNA] (ISOFORMS 2 AND 3)</scope>
    <scope>NUCLEOTIDE SEQUENCE [LARGE SCALE MRNA] OF 598-833 (ISOFORM 1)</scope>
    <scope>VARIANT ILE-331</scope>
    <source>
        <tissue>Kidney proximal tubule</tissue>
        <tissue>Lung</tissue>
        <tissue>Testis</tissue>
    </source>
</reference>
<reference key="2">
    <citation type="journal article" date="2006" name="Nature">
        <title>The DNA sequence, annotation and analysis of human chromosome 3.</title>
        <authorList>
            <person name="Muzny D.M."/>
            <person name="Scherer S.E."/>
            <person name="Kaul R."/>
            <person name="Wang J."/>
            <person name="Yu J."/>
            <person name="Sudbrak R."/>
            <person name="Buhay C.J."/>
            <person name="Chen R."/>
            <person name="Cree A."/>
            <person name="Ding Y."/>
            <person name="Dugan-Rocha S."/>
            <person name="Gill R."/>
            <person name="Gunaratne P."/>
            <person name="Harris R.A."/>
            <person name="Hawes A.C."/>
            <person name="Hernandez J."/>
            <person name="Hodgson A.V."/>
            <person name="Hume J."/>
            <person name="Jackson A."/>
            <person name="Khan Z.M."/>
            <person name="Kovar-Smith C."/>
            <person name="Lewis L.R."/>
            <person name="Lozado R.J."/>
            <person name="Metzker M.L."/>
            <person name="Milosavljevic A."/>
            <person name="Miner G.R."/>
            <person name="Morgan M.B."/>
            <person name="Nazareth L.V."/>
            <person name="Scott G."/>
            <person name="Sodergren E."/>
            <person name="Song X.-Z."/>
            <person name="Steffen D."/>
            <person name="Wei S."/>
            <person name="Wheeler D.A."/>
            <person name="Wright M.W."/>
            <person name="Worley K.C."/>
            <person name="Yuan Y."/>
            <person name="Zhang Z."/>
            <person name="Adams C.Q."/>
            <person name="Ansari-Lari M.A."/>
            <person name="Ayele M."/>
            <person name="Brown M.J."/>
            <person name="Chen G."/>
            <person name="Chen Z."/>
            <person name="Clendenning J."/>
            <person name="Clerc-Blankenburg K.P."/>
            <person name="Chen R."/>
            <person name="Chen Z."/>
            <person name="Davis C."/>
            <person name="Delgado O."/>
            <person name="Dinh H.H."/>
            <person name="Dong W."/>
            <person name="Draper H."/>
            <person name="Ernst S."/>
            <person name="Fu G."/>
            <person name="Gonzalez-Garay M.L."/>
            <person name="Garcia D.K."/>
            <person name="Gillett W."/>
            <person name="Gu J."/>
            <person name="Hao B."/>
            <person name="Haugen E."/>
            <person name="Havlak P."/>
            <person name="He X."/>
            <person name="Hennig S."/>
            <person name="Hu S."/>
            <person name="Huang W."/>
            <person name="Jackson L.R."/>
            <person name="Jacob L.S."/>
            <person name="Kelly S.H."/>
            <person name="Kube M."/>
            <person name="Levy R."/>
            <person name="Li Z."/>
            <person name="Liu B."/>
            <person name="Liu J."/>
            <person name="Liu W."/>
            <person name="Lu J."/>
            <person name="Maheshwari M."/>
            <person name="Nguyen B.-V."/>
            <person name="Okwuonu G.O."/>
            <person name="Palmeiri A."/>
            <person name="Pasternak S."/>
            <person name="Perez L.M."/>
            <person name="Phelps K.A."/>
            <person name="Plopper F.J."/>
            <person name="Qiang B."/>
            <person name="Raymond C."/>
            <person name="Rodriguez R."/>
            <person name="Saenphimmachak C."/>
            <person name="Santibanez J."/>
            <person name="Shen H."/>
            <person name="Shen Y."/>
            <person name="Subramanian S."/>
            <person name="Tabor P.E."/>
            <person name="Verduzco D."/>
            <person name="Waldron L."/>
            <person name="Wang J."/>
            <person name="Wang J."/>
            <person name="Wang Q."/>
            <person name="Williams G.A."/>
            <person name="Wong G.K.-S."/>
            <person name="Yao Z."/>
            <person name="Zhang J."/>
            <person name="Zhang X."/>
            <person name="Zhao G."/>
            <person name="Zhou J."/>
            <person name="Zhou Y."/>
            <person name="Nelson D."/>
            <person name="Lehrach H."/>
            <person name="Reinhardt R."/>
            <person name="Naylor S.L."/>
            <person name="Yang H."/>
            <person name="Olson M."/>
            <person name="Weinstock G."/>
            <person name="Gibbs R.A."/>
        </authorList>
    </citation>
    <scope>NUCLEOTIDE SEQUENCE [LARGE SCALE GENOMIC DNA]</scope>
</reference>
<reference key="3">
    <citation type="submission" date="2005-07" db="EMBL/GenBank/DDBJ databases">
        <authorList>
            <person name="Mural R.J."/>
            <person name="Istrail S."/>
            <person name="Sutton G.G."/>
            <person name="Florea L."/>
            <person name="Halpern A.L."/>
            <person name="Mobarry C.M."/>
            <person name="Lippert R."/>
            <person name="Walenz B."/>
            <person name="Shatkay H."/>
            <person name="Dew I."/>
            <person name="Miller J.R."/>
            <person name="Flanigan M.J."/>
            <person name="Edwards N.J."/>
            <person name="Bolanos R."/>
            <person name="Fasulo D."/>
            <person name="Halldorsson B.V."/>
            <person name="Hannenhalli S."/>
            <person name="Turner R."/>
            <person name="Yooseph S."/>
            <person name="Lu F."/>
            <person name="Nusskern D.R."/>
            <person name="Shue B.C."/>
            <person name="Zheng X.H."/>
            <person name="Zhong F."/>
            <person name="Delcher A.L."/>
            <person name="Huson D.H."/>
            <person name="Kravitz S.A."/>
            <person name="Mouchard L."/>
            <person name="Reinert K."/>
            <person name="Remington K.A."/>
            <person name="Clark A.G."/>
            <person name="Waterman M.S."/>
            <person name="Eichler E.E."/>
            <person name="Adams M.D."/>
            <person name="Hunkapiller M.W."/>
            <person name="Myers E.W."/>
            <person name="Venter J.C."/>
        </authorList>
    </citation>
    <scope>NUCLEOTIDE SEQUENCE [LARGE SCALE GENOMIC DNA]</scope>
</reference>
<reference key="4">
    <citation type="journal article" date="2004" name="Genome Res.">
        <title>The status, quality, and expansion of the NIH full-length cDNA project: the Mammalian Gene Collection (MGC).</title>
        <authorList>
            <consortium name="The MGC Project Team"/>
        </authorList>
    </citation>
    <scope>NUCLEOTIDE SEQUENCE [LARGE SCALE MRNA] (ISOFORM 1)</scope>
    <scope>VARIANTS ILE-331 AND ILE-382</scope>
    <source>
        <tissue>Lung</tissue>
    </source>
</reference>
<reference key="5">
    <citation type="journal article" date="2018" name="Cell. Physiol. Biochem.">
        <title>EFHB is a Novel Cytosolic Ca2+ Sensor That Modulates STIM1-SARAF Interaction.</title>
        <authorList>
            <person name="Albarran L."/>
            <person name="Lopez J.J."/>
            <person name="Jardin I."/>
            <person name="Sanchez-Collado J."/>
            <person name="Berna-Erro A."/>
            <person name="Smani T."/>
            <person name="Camello P.J."/>
            <person name="Salido G.M."/>
            <person name="Rosado J.A."/>
        </authorList>
    </citation>
    <scope>FUNCTION</scope>
    <scope>INTERACTION WITH ORAI1 AND STIM1</scope>
    <scope>SUBCELLULAR LOCATION</scope>
</reference>
<reference evidence="11" key="6">
    <citation type="journal article" date="2022" name="Proc. Natl. Acad. Sci. U.S.A.">
        <title>SPACA9 is a lumenal protein of human ciliary singlet and doublet microtubules.</title>
        <authorList>
            <person name="Gui M."/>
            <person name="Croft J.T."/>
            <person name="Zabeo D."/>
            <person name="Acharya V."/>
            <person name="Kollman J.M."/>
            <person name="Burgoyne T."/>
            <person name="Hoog J.L."/>
            <person name="Brown A."/>
        </authorList>
    </citation>
    <scope>STRUCTURE BY ELECTRON MICROSCOPY (3.60 ANGSTROMS)</scope>
    <scope>FUNCTION</scope>
    <scope>SUBCELLULAR LOCATION</scope>
    <scope>TISSUE SPECIFICITY</scope>
</reference>
<organism>
    <name type="scientific">Homo sapiens</name>
    <name type="common">Human</name>
    <dbReference type="NCBI Taxonomy" id="9606"/>
    <lineage>
        <taxon>Eukaryota</taxon>
        <taxon>Metazoa</taxon>
        <taxon>Chordata</taxon>
        <taxon>Craniata</taxon>
        <taxon>Vertebrata</taxon>
        <taxon>Euteleostomi</taxon>
        <taxon>Mammalia</taxon>
        <taxon>Eutheria</taxon>
        <taxon>Euarchontoglires</taxon>
        <taxon>Primates</taxon>
        <taxon>Haplorrhini</taxon>
        <taxon>Catarrhini</taxon>
        <taxon>Hominidae</taxon>
        <taxon>Homo</taxon>
    </lineage>
</organism>
<evidence type="ECO:0000250" key="1">
    <source>
        <dbReference type="UniProtKB" id="Q8CDU5"/>
    </source>
</evidence>
<evidence type="ECO:0000255" key="2">
    <source>
        <dbReference type="PROSITE-ProRule" id="PRU00448"/>
    </source>
</evidence>
<evidence type="ECO:0000269" key="3">
    <source>
    </source>
</evidence>
<evidence type="ECO:0000269" key="4">
    <source>
    </source>
</evidence>
<evidence type="ECO:0000269" key="5">
    <source>
    </source>
</evidence>
<evidence type="ECO:0000269" key="6">
    <source>
    </source>
</evidence>
<evidence type="ECO:0000303" key="7">
    <source>
    </source>
</evidence>
<evidence type="ECO:0000305" key="8"/>
<evidence type="ECO:0000305" key="9">
    <source>
    </source>
</evidence>
<evidence type="ECO:0000312" key="10">
    <source>
        <dbReference type="HGNC" id="HGNC:26330"/>
    </source>
</evidence>
<evidence type="ECO:0007744" key="11">
    <source>
        <dbReference type="PDB" id="7UNG"/>
    </source>
</evidence>
<keyword id="KW-0002">3D-structure</keyword>
<keyword id="KW-0025">Alternative splicing</keyword>
<keyword id="KW-0106">Calcium</keyword>
<keyword id="KW-0109">Calcium transport</keyword>
<keyword id="KW-0966">Cell projection</keyword>
<keyword id="KW-0969">Cilium</keyword>
<keyword id="KW-0963">Cytoplasm</keyword>
<keyword id="KW-0206">Cytoskeleton</keyword>
<keyword id="KW-0282">Flagellum</keyword>
<keyword id="KW-0406">Ion transport</keyword>
<keyword id="KW-0479">Metal-binding</keyword>
<keyword id="KW-1267">Proteomics identification</keyword>
<keyword id="KW-1185">Reference proteome</keyword>
<keyword id="KW-0677">Repeat</keyword>
<keyword id="KW-0813">Transport</keyword>
<accession>Q8N7U6</accession>
<accession>A6ND25</accession>
<accession>A8MPR3</accession>
<accession>Q6ZWK9</accession>
<accession>Q8IV58</accession>
<accession>Q96LQ6</accession>
<dbReference type="EMBL" id="AK057929">
    <property type="protein sequence ID" value="BAB71614.1"/>
    <property type="status" value="ALT_INIT"/>
    <property type="molecule type" value="mRNA"/>
</dbReference>
<dbReference type="EMBL" id="AK097644">
    <property type="status" value="NOT_ANNOTATED_CDS"/>
    <property type="molecule type" value="mRNA"/>
</dbReference>
<dbReference type="EMBL" id="AK122616">
    <property type="protein sequence ID" value="BAC85491.1"/>
    <property type="molecule type" value="mRNA"/>
</dbReference>
<dbReference type="EMBL" id="AC104182">
    <property type="status" value="NOT_ANNOTATED_CDS"/>
    <property type="molecule type" value="Genomic_DNA"/>
</dbReference>
<dbReference type="EMBL" id="CH471055">
    <property type="protein sequence ID" value="EAW64300.1"/>
    <property type="molecule type" value="Genomic_DNA"/>
</dbReference>
<dbReference type="EMBL" id="BC028198">
    <property type="protein sequence ID" value="AAH28198.1"/>
    <property type="status" value="ALT_INIT"/>
    <property type="molecule type" value="mRNA"/>
</dbReference>
<dbReference type="CCDS" id="CCDS33715.2">
    <molecule id="Q8N7U6-1"/>
</dbReference>
<dbReference type="CCDS" id="CCDS82744.1">
    <molecule id="Q8N7U6-3"/>
</dbReference>
<dbReference type="RefSeq" id="NP_001317617.1">
    <molecule id="Q8N7U6-3"/>
    <property type="nucleotide sequence ID" value="NM_001330688.2"/>
</dbReference>
<dbReference type="RefSeq" id="NP_653316.3">
    <molecule id="Q8N7U6-1"/>
    <property type="nucleotide sequence ID" value="NM_144715.3"/>
</dbReference>
<dbReference type="PDB" id="7UNG">
    <property type="method" value="EM"/>
    <property type="resolution" value="3.60 A"/>
    <property type="chains" value="1/2=1-833"/>
</dbReference>
<dbReference type="PDB" id="8J07">
    <property type="method" value="EM"/>
    <property type="resolution" value="4.10 A"/>
    <property type="chains" value="1A/1B/1C=1-833"/>
</dbReference>
<dbReference type="PDBsum" id="7UNG"/>
<dbReference type="PDBsum" id="8J07"/>
<dbReference type="EMDB" id="EMD-26624"/>
<dbReference type="EMDB" id="EMD-35888"/>
<dbReference type="SMR" id="Q8N7U6"/>
<dbReference type="BioGRID" id="127397">
    <property type="interactions" value="3"/>
</dbReference>
<dbReference type="FunCoup" id="Q8N7U6">
    <property type="interactions" value="37"/>
</dbReference>
<dbReference type="IntAct" id="Q8N7U6">
    <property type="interactions" value="3"/>
</dbReference>
<dbReference type="STRING" id="9606.ENSP00000295824"/>
<dbReference type="iPTMnet" id="Q8N7U6"/>
<dbReference type="PhosphoSitePlus" id="Q8N7U6"/>
<dbReference type="BioMuta" id="EFHB"/>
<dbReference type="DMDM" id="313104304"/>
<dbReference type="MassIVE" id="Q8N7U6"/>
<dbReference type="PaxDb" id="9606-ENSP00000295824"/>
<dbReference type="PeptideAtlas" id="Q8N7U6"/>
<dbReference type="ProteomicsDB" id="72328">
    <molecule id="Q8N7U6-1"/>
</dbReference>
<dbReference type="ProteomicsDB" id="72329">
    <molecule id="Q8N7U6-2"/>
</dbReference>
<dbReference type="ProteomicsDB" id="72330">
    <molecule id="Q8N7U6-3"/>
</dbReference>
<dbReference type="Antibodypedia" id="27043">
    <property type="antibodies" value="102 antibodies from 16 providers"/>
</dbReference>
<dbReference type="DNASU" id="151651"/>
<dbReference type="Ensembl" id="ENST00000295824.14">
    <molecule id="Q8N7U6-1"/>
    <property type="protein sequence ID" value="ENSP00000295824.9"/>
    <property type="gene ID" value="ENSG00000163576.18"/>
</dbReference>
<dbReference type="Ensembl" id="ENST00000344838.8">
    <molecule id="Q8N7U6-3"/>
    <property type="protein sequence ID" value="ENSP00000342263.4"/>
    <property type="gene ID" value="ENSG00000163576.18"/>
</dbReference>
<dbReference type="GeneID" id="151651"/>
<dbReference type="KEGG" id="hsa:151651"/>
<dbReference type="MANE-Select" id="ENST00000295824.14">
    <property type="protein sequence ID" value="ENSP00000295824.9"/>
    <property type="RefSeq nucleotide sequence ID" value="NM_144715.4"/>
    <property type="RefSeq protein sequence ID" value="NP_653316.3"/>
</dbReference>
<dbReference type="UCSC" id="uc003cbl.5">
    <molecule id="Q8N7U6-1"/>
    <property type="organism name" value="human"/>
</dbReference>
<dbReference type="AGR" id="HGNC:26330"/>
<dbReference type="CTD" id="151651"/>
<dbReference type="DisGeNET" id="151651"/>
<dbReference type="GeneCards" id="EFHB"/>
<dbReference type="HGNC" id="HGNC:26330">
    <property type="gene designation" value="EFHB"/>
</dbReference>
<dbReference type="HPA" id="ENSG00000163576">
    <property type="expression patterns" value="Tissue enhanced (fallopian tube, testis)"/>
</dbReference>
<dbReference type="neXtProt" id="NX_Q8N7U6"/>
<dbReference type="OpenTargets" id="ENSG00000163576"/>
<dbReference type="PharmGKB" id="PA134987079"/>
<dbReference type="VEuPathDB" id="HostDB:ENSG00000163576"/>
<dbReference type="eggNOG" id="KOG0032">
    <property type="taxonomic scope" value="Eukaryota"/>
</dbReference>
<dbReference type="GeneTree" id="ENSGT00530000063528"/>
<dbReference type="HOGENOM" id="CLU_017580_0_0_1"/>
<dbReference type="InParanoid" id="Q8N7U6"/>
<dbReference type="OMA" id="DCIRPIY"/>
<dbReference type="OrthoDB" id="2096280at2759"/>
<dbReference type="PAN-GO" id="Q8N7U6">
    <property type="GO annotations" value="0 GO annotations based on evolutionary models"/>
</dbReference>
<dbReference type="PhylomeDB" id="Q8N7U6"/>
<dbReference type="TreeFam" id="TF323832"/>
<dbReference type="PathwayCommons" id="Q8N7U6"/>
<dbReference type="SignaLink" id="Q8N7U6"/>
<dbReference type="BioGRID-ORCS" id="151651">
    <property type="hits" value="13 hits in 1148 CRISPR screens"/>
</dbReference>
<dbReference type="ChiTaRS" id="EFHB">
    <property type="organism name" value="human"/>
</dbReference>
<dbReference type="GenomeRNAi" id="151651"/>
<dbReference type="Pharos" id="Q8N7U6">
    <property type="development level" value="Tdark"/>
</dbReference>
<dbReference type="PRO" id="PR:Q8N7U6"/>
<dbReference type="Proteomes" id="UP000005640">
    <property type="component" value="Chromosome 3"/>
</dbReference>
<dbReference type="RNAct" id="Q8N7U6">
    <property type="molecule type" value="protein"/>
</dbReference>
<dbReference type="Bgee" id="ENSG00000163576">
    <property type="expression patterns" value="Expressed in bronchial epithelial cell and 106 other cell types or tissues"/>
</dbReference>
<dbReference type="ExpressionAtlas" id="Q8N7U6">
    <property type="expression patterns" value="baseline and differential"/>
</dbReference>
<dbReference type="GO" id="GO:0160111">
    <property type="term" value="C:axonemal A tubule inner sheath"/>
    <property type="evidence" value="ECO:0000250"/>
    <property type="project" value="UniProtKB"/>
</dbReference>
<dbReference type="GO" id="GO:0005879">
    <property type="term" value="C:axonemal microtubule"/>
    <property type="evidence" value="ECO:0000314"/>
    <property type="project" value="UniProtKB"/>
</dbReference>
<dbReference type="GO" id="GO:0036126">
    <property type="term" value="C:sperm flagellum"/>
    <property type="evidence" value="ECO:0000250"/>
    <property type="project" value="UniProtKB"/>
</dbReference>
<dbReference type="GO" id="GO:0005509">
    <property type="term" value="F:calcium ion binding"/>
    <property type="evidence" value="ECO:0007669"/>
    <property type="project" value="InterPro"/>
</dbReference>
<dbReference type="GO" id="GO:0061891">
    <property type="term" value="F:calcium ion sensor activity"/>
    <property type="evidence" value="ECO:0000315"/>
    <property type="project" value="UniProtKB"/>
</dbReference>
<dbReference type="GO" id="GO:0006816">
    <property type="term" value="P:calcium ion transport"/>
    <property type="evidence" value="ECO:0007669"/>
    <property type="project" value="UniProtKB-KW"/>
</dbReference>
<dbReference type="GO" id="GO:0030317">
    <property type="term" value="P:flagellated sperm motility"/>
    <property type="evidence" value="ECO:0000250"/>
    <property type="project" value="UniProtKB"/>
</dbReference>
<dbReference type="GO" id="GO:0032091">
    <property type="term" value="P:negative regulation of protein binding"/>
    <property type="evidence" value="ECO:0000315"/>
    <property type="project" value="UniProtKB"/>
</dbReference>
<dbReference type="GO" id="GO:0070884">
    <property type="term" value="P:regulation of calcineurin-NFAT signaling cascade"/>
    <property type="evidence" value="ECO:0000315"/>
    <property type="project" value="UniProtKB"/>
</dbReference>
<dbReference type="GO" id="GO:2001256">
    <property type="term" value="P:regulation of store-operated calcium entry"/>
    <property type="evidence" value="ECO:0000315"/>
    <property type="project" value="UniProtKB"/>
</dbReference>
<dbReference type="CDD" id="cd00051">
    <property type="entry name" value="EFh"/>
    <property type="match status" value="1"/>
</dbReference>
<dbReference type="FunFam" id="1.10.238.10:FF:000308">
    <property type="entry name" value="EF-hand domain family member B"/>
    <property type="match status" value="1"/>
</dbReference>
<dbReference type="Gene3D" id="1.10.238.10">
    <property type="entry name" value="EF-hand"/>
    <property type="match status" value="1"/>
</dbReference>
<dbReference type="InterPro" id="IPR011992">
    <property type="entry name" value="EF-hand-dom_pair"/>
</dbReference>
<dbReference type="InterPro" id="IPR018247">
    <property type="entry name" value="EF_Hand_1_Ca_BS"/>
</dbReference>
<dbReference type="InterPro" id="IPR002048">
    <property type="entry name" value="EF_hand_dom"/>
</dbReference>
<dbReference type="InterPro" id="IPR040193">
    <property type="entry name" value="EFHC1/EFHC2/EFHB"/>
</dbReference>
<dbReference type="PANTHER" id="PTHR12086">
    <property type="entry name" value="EF-HAND DOMAIN C-TERMINAL CONTAINING PROTEIN"/>
    <property type="match status" value="1"/>
</dbReference>
<dbReference type="PANTHER" id="PTHR12086:SF12">
    <property type="entry name" value="EF-HAND DOMAIN-CONTAINING FAMILY MEMBER B"/>
    <property type="match status" value="1"/>
</dbReference>
<dbReference type="Pfam" id="PF13499">
    <property type="entry name" value="EF-hand_7"/>
    <property type="match status" value="1"/>
</dbReference>
<dbReference type="Pfam" id="PF25325">
    <property type="entry name" value="EF-hand_EFHB_C"/>
    <property type="match status" value="1"/>
</dbReference>
<dbReference type="SMART" id="SM00054">
    <property type="entry name" value="EFh"/>
    <property type="match status" value="2"/>
</dbReference>
<dbReference type="SUPFAM" id="SSF47473">
    <property type="entry name" value="EF-hand"/>
    <property type="match status" value="1"/>
</dbReference>
<dbReference type="PROSITE" id="PS00018">
    <property type="entry name" value="EF_HAND_1"/>
    <property type="match status" value="1"/>
</dbReference>
<dbReference type="PROSITE" id="PS50222">
    <property type="entry name" value="EF_HAND_2"/>
    <property type="match status" value="2"/>
</dbReference>
<sequence>MNMEIGHPHEGKDDLGDKRVIMGTKFPMELGIRVGLGKEDSRCGESPVVSNKCEGRMAPPETKFPLSKGLEMGLERQNISRTVMQRGSLGVDSVSASQGTKPSLLPGRMGLENESLLAGYTHERIIQPPLGRVCGSSQAAGSRRAPLASGPEGVEELVGKPAFVMEPRQEMEKESTCVLMKPNTEIKLPVEVDIGLTQAEGPDETKNTEPQMGLVIEPPQCQFAQQHEQRKEAGNIESGVEPPDRIRPIYSGKFFDRTPCWPSAGKVIPVGYRVATCLTEKLPRLITPPEAKKYFNFRYPPAGVERVFYGRANDPQIAPYLTHGIRSKISVLANTLINPQPITTFQQKIKDKKESIYLSNRRAPLGKSHDQAPGLPKGMDTTNTTFGTAVIKEYSAKDVVNPPKSYEEVFKEGNEGHDLYVVSHNDYYAGEAKNRKYNPSSFHRCSVYGVPTPHFNDGRAMAKSLYWLHELQMKRGAKFVSKRADDFKEKFQHKLGRVLDPIAETMNVPPDCTFGACLRPEEYGVGDLIHNRLPDEYLRGKDRQRALIAAVRHHLKKVNYQKFDTLLAAFRHYDKKGDGMIDKDELQEACDQANLSLDDKLLDQLFDYCDVDNDGFINYLEFANFLNWKDKMLLKEYEERVIIKGRKPDCVNPTEANVEEPEQTLLIKPEDIVLKEAGSTEKTLRTLLRPSDKVSNYYKTTSSEINAIVGAIPSTCYPICGVPTIRSDIPAPRIRRISDRTNYGEEGSAYSLLYPTIFARKGVFERDFFKTRSKEEIAEILCNIGVKLSDEEFENVWNLASKKHHRGEVCVENIRNVLDELRHADRIKCKTLM</sequence>
<protein>
    <recommendedName>
        <fullName evidence="8">EF-hand domain-containing family member B</fullName>
    </recommendedName>
    <alternativeName>
        <fullName>Cilia- and flagella-associated protein 21</fullName>
    </alternativeName>
</protein>